<organism>
    <name type="scientific">Thermosipho africanus (strain TCF52B)</name>
    <dbReference type="NCBI Taxonomy" id="484019"/>
    <lineage>
        <taxon>Bacteria</taxon>
        <taxon>Thermotogati</taxon>
        <taxon>Thermotogota</taxon>
        <taxon>Thermotogae</taxon>
        <taxon>Thermotogales</taxon>
        <taxon>Fervidobacteriaceae</taxon>
        <taxon>Thermosipho</taxon>
    </lineage>
</organism>
<accession>B7IEZ6</accession>
<comment type="function">
    <text evidence="1">Catalyzes the hydrolysis of glutamine to glutamate and ammonia as part of the biosynthesis of pyridoxal 5'-phosphate. The resulting ammonia molecule is channeled to the active site of PdxS.</text>
</comment>
<comment type="catalytic activity">
    <reaction evidence="1">
        <text>aldehydo-D-ribose 5-phosphate + D-glyceraldehyde 3-phosphate + L-glutamine = pyridoxal 5'-phosphate + L-glutamate + phosphate + 3 H2O + H(+)</text>
        <dbReference type="Rhea" id="RHEA:31507"/>
        <dbReference type="ChEBI" id="CHEBI:15377"/>
        <dbReference type="ChEBI" id="CHEBI:15378"/>
        <dbReference type="ChEBI" id="CHEBI:29985"/>
        <dbReference type="ChEBI" id="CHEBI:43474"/>
        <dbReference type="ChEBI" id="CHEBI:58273"/>
        <dbReference type="ChEBI" id="CHEBI:58359"/>
        <dbReference type="ChEBI" id="CHEBI:59776"/>
        <dbReference type="ChEBI" id="CHEBI:597326"/>
        <dbReference type="EC" id="4.3.3.6"/>
    </reaction>
</comment>
<comment type="catalytic activity">
    <reaction evidence="1">
        <text>L-glutamine + H2O = L-glutamate + NH4(+)</text>
        <dbReference type="Rhea" id="RHEA:15889"/>
        <dbReference type="ChEBI" id="CHEBI:15377"/>
        <dbReference type="ChEBI" id="CHEBI:28938"/>
        <dbReference type="ChEBI" id="CHEBI:29985"/>
        <dbReference type="ChEBI" id="CHEBI:58359"/>
        <dbReference type="EC" id="3.5.1.2"/>
    </reaction>
</comment>
<comment type="pathway">
    <text evidence="1">Cofactor biosynthesis; pyridoxal 5'-phosphate biosynthesis.</text>
</comment>
<comment type="subunit">
    <text evidence="1">In the presence of PdxS, forms a dodecamer of heterodimers. Only shows activity in the heterodimer.</text>
</comment>
<comment type="similarity">
    <text evidence="1">Belongs to the glutaminase PdxT/SNO family.</text>
</comment>
<sequence length="188" mass="21354">MKIGVSGIQGDFREHKVMLEKLGVDVKVVRKPEELDEVDGLVIPGGESTTMIRIMKMVNLYEKLKQKIKEGFPVFGTCAGMILLSKEVVNFPQDSLGVIDIKVERNAYGRQVDSFEEQIEVKGFEKTFNAIFIRAPKVVDYGENVEVLATYMDSPVLLRQNNVLVASFHPELTEDTRIHEYFLNMVKK</sequence>
<evidence type="ECO:0000255" key="1">
    <source>
        <dbReference type="HAMAP-Rule" id="MF_01615"/>
    </source>
</evidence>
<reference key="1">
    <citation type="journal article" date="2009" name="J. Bacteriol.">
        <title>The genome of Thermosipho africanus TCF52B: lateral genetic connections to the Firmicutes and Archaea.</title>
        <authorList>
            <person name="Nesboe C.L."/>
            <person name="Bapteste E."/>
            <person name="Curtis B."/>
            <person name="Dahle H."/>
            <person name="Lopez P."/>
            <person name="Macleod D."/>
            <person name="Dlutek M."/>
            <person name="Bowman S."/>
            <person name="Zhaxybayeva O."/>
            <person name="Birkeland N.-K."/>
            <person name="Doolittle W.F."/>
        </authorList>
    </citation>
    <scope>NUCLEOTIDE SEQUENCE [LARGE SCALE GENOMIC DNA]</scope>
    <source>
        <strain>TCF52B</strain>
    </source>
</reference>
<proteinExistence type="inferred from homology"/>
<feature type="chain" id="PRO_1000185908" description="Pyridoxal 5'-phosphate synthase subunit PdxT">
    <location>
        <begin position="1"/>
        <end position="188"/>
    </location>
</feature>
<feature type="active site" description="Nucleophile" evidence="1">
    <location>
        <position position="78"/>
    </location>
</feature>
<feature type="active site" description="Charge relay system" evidence="1">
    <location>
        <position position="169"/>
    </location>
</feature>
<feature type="active site" description="Charge relay system" evidence="1">
    <location>
        <position position="171"/>
    </location>
</feature>
<feature type="binding site" evidence="1">
    <location>
        <begin position="46"/>
        <end position="48"/>
    </location>
    <ligand>
        <name>L-glutamine</name>
        <dbReference type="ChEBI" id="CHEBI:58359"/>
    </ligand>
</feature>
<feature type="binding site" evidence="1">
    <location>
        <position position="105"/>
    </location>
    <ligand>
        <name>L-glutamine</name>
        <dbReference type="ChEBI" id="CHEBI:58359"/>
    </ligand>
</feature>
<feature type="binding site" evidence="1">
    <location>
        <begin position="133"/>
        <end position="134"/>
    </location>
    <ligand>
        <name>L-glutamine</name>
        <dbReference type="ChEBI" id="CHEBI:58359"/>
    </ligand>
</feature>
<name>PDXT_THEAB</name>
<protein>
    <recommendedName>
        <fullName evidence="1">Pyridoxal 5'-phosphate synthase subunit PdxT</fullName>
        <ecNumber evidence="1">4.3.3.6</ecNumber>
    </recommendedName>
    <alternativeName>
        <fullName evidence="1">Pdx2</fullName>
    </alternativeName>
    <alternativeName>
        <fullName evidence="1">Pyridoxal 5'-phosphate synthase glutaminase subunit</fullName>
        <ecNumber evidence="1">3.5.1.2</ecNumber>
    </alternativeName>
</protein>
<keyword id="KW-0315">Glutamine amidotransferase</keyword>
<keyword id="KW-0378">Hydrolase</keyword>
<keyword id="KW-0456">Lyase</keyword>
<keyword id="KW-0663">Pyridoxal phosphate</keyword>
<keyword id="KW-1185">Reference proteome</keyword>
<gene>
    <name evidence="1" type="primary">pdxT</name>
    <name type="ordered locus">THA_153</name>
</gene>
<dbReference type="EC" id="4.3.3.6" evidence="1"/>
<dbReference type="EC" id="3.5.1.2" evidence="1"/>
<dbReference type="EMBL" id="CP001185">
    <property type="protein sequence ID" value="ACJ74660.1"/>
    <property type="molecule type" value="Genomic_DNA"/>
</dbReference>
<dbReference type="RefSeq" id="WP_004103609.1">
    <property type="nucleotide sequence ID" value="NC_011653.1"/>
</dbReference>
<dbReference type="SMR" id="B7IEZ6"/>
<dbReference type="STRING" id="484019.THA_153"/>
<dbReference type="MEROPS" id="C26.A32"/>
<dbReference type="KEGG" id="taf:THA_153"/>
<dbReference type="eggNOG" id="COG0311">
    <property type="taxonomic scope" value="Bacteria"/>
</dbReference>
<dbReference type="HOGENOM" id="CLU_069674_2_0_0"/>
<dbReference type="OrthoDB" id="9810320at2"/>
<dbReference type="UniPathway" id="UPA00245"/>
<dbReference type="Proteomes" id="UP000002453">
    <property type="component" value="Chromosome"/>
</dbReference>
<dbReference type="GO" id="GO:0005829">
    <property type="term" value="C:cytosol"/>
    <property type="evidence" value="ECO:0007669"/>
    <property type="project" value="TreeGrafter"/>
</dbReference>
<dbReference type="GO" id="GO:1903600">
    <property type="term" value="C:glutaminase complex"/>
    <property type="evidence" value="ECO:0007669"/>
    <property type="project" value="TreeGrafter"/>
</dbReference>
<dbReference type="GO" id="GO:0004359">
    <property type="term" value="F:glutaminase activity"/>
    <property type="evidence" value="ECO:0007669"/>
    <property type="project" value="UniProtKB-UniRule"/>
</dbReference>
<dbReference type="GO" id="GO:0036381">
    <property type="term" value="F:pyridoxal 5'-phosphate synthase (glutamine hydrolysing) activity"/>
    <property type="evidence" value="ECO:0007669"/>
    <property type="project" value="UniProtKB-UniRule"/>
</dbReference>
<dbReference type="GO" id="GO:0006543">
    <property type="term" value="P:glutamine catabolic process"/>
    <property type="evidence" value="ECO:0007669"/>
    <property type="project" value="UniProtKB-UniRule"/>
</dbReference>
<dbReference type="GO" id="GO:0042823">
    <property type="term" value="P:pyridoxal phosphate biosynthetic process"/>
    <property type="evidence" value="ECO:0007669"/>
    <property type="project" value="UniProtKB-UniRule"/>
</dbReference>
<dbReference type="GO" id="GO:0008614">
    <property type="term" value="P:pyridoxine metabolic process"/>
    <property type="evidence" value="ECO:0007669"/>
    <property type="project" value="TreeGrafter"/>
</dbReference>
<dbReference type="CDD" id="cd01749">
    <property type="entry name" value="GATase1_PB"/>
    <property type="match status" value="1"/>
</dbReference>
<dbReference type="FunFam" id="3.40.50.880:FF:000010">
    <property type="entry name" value="uncharacterized protein LOC100176842 isoform X2"/>
    <property type="match status" value="1"/>
</dbReference>
<dbReference type="Gene3D" id="3.40.50.880">
    <property type="match status" value="1"/>
</dbReference>
<dbReference type="HAMAP" id="MF_01615">
    <property type="entry name" value="PdxT"/>
    <property type="match status" value="1"/>
</dbReference>
<dbReference type="InterPro" id="IPR029062">
    <property type="entry name" value="Class_I_gatase-like"/>
</dbReference>
<dbReference type="InterPro" id="IPR002161">
    <property type="entry name" value="PdxT/SNO"/>
</dbReference>
<dbReference type="InterPro" id="IPR021196">
    <property type="entry name" value="PdxT/SNO_CS"/>
</dbReference>
<dbReference type="NCBIfam" id="TIGR03800">
    <property type="entry name" value="PLP_synth_Pdx2"/>
    <property type="match status" value="1"/>
</dbReference>
<dbReference type="NCBIfam" id="NF010050">
    <property type="entry name" value="PRK13526.1"/>
    <property type="match status" value="1"/>
</dbReference>
<dbReference type="PANTHER" id="PTHR31559">
    <property type="entry name" value="PYRIDOXAL 5'-PHOSPHATE SYNTHASE SUBUNIT SNO"/>
    <property type="match status" value="1"/>
</dbReference>
<dbReference type="PANTHER" id="PTHR31559:SF0">
    <property type="entry name" value="PYRIDOXAL 5'-PHOSPHATE SYNTHASE SUBUNIT SNO1-RELATED"/>
    <property type="match status" value="1"/>
</dbReference>
<dbReference type="Pfam" id="PF01174">
    <property type="entry name" value="SNO"/>
    <property type="match status" value="1"/>
</dbReference>
<dbReference type="PIRSF" id="PIRSF005639">
    <property type="entry name" value="Glut_amidoT_SNO"/>
    <property type="match status" value="1"/>
</dbReference>
<dbReference type="SUPFAM" id="SSF52317">
    <property type="entry name" value="Class I glutamine amidotransferase-like"/>
    <property type="match status" value="1"/>
</dbReference>
<dbReference type="PROSITE" id="PS01236">
    <property type="entry name" value="PDXT_SNO_1"/>
    <property type="match status" value="1"/>
</dbReference>
<dbReference type="PROSITE" id="PS51130">
    <property type="entry name" value="PDXT_SNO_2"/>
    <property type="match status" value="1"/>
</dbReference>